<evidence type="ECO:0000255" key="1">
    <source>
        <dbReference type="HAMAP-Rule" id="MF_00426"/>
    </source>
</evidence>
<gene>
    <name evidence="1" type="primary">nqrB</name>
    <name type="ordered locus">TC_0550</name>
</gene>
<organism>
    <name type="scientific">Chlamydia muridarum (strain MoPn / Nigg)</name>
    <dbReference type="NCBI Taxonomy" id="243161"/>
    <lineage>
        <taxon>Bacteria</taxon>
        <taxon>Pseudomonadati</taxon>
        <taxon>Chlamydiota</taxon>
        <taxon>Chlamydiia</taxon>
        <taxon>Chlamydiales</taxon>
        <taxon>Chlamydiaceae</taxon>
        <taxon>Chlamydia/Chlamydophila group</taxon>
        <taxon>Chlamydia</taxon>
    </lineage>
</organism>
<accession>Q9PKB6</accession>
<feature type="chain" id="PRO_0000074433" description="Na(+)-translocating NADH-quinone reductase subunit B">
    <location>
        <begin position="1"/>
        <end position="503"/>
    </location>
</feature>
<feature type="transmembrane region" description="Helical" evidence="1">
    <location>
        <begin position="55"/>
        <end position="75"/>
    </location>
</feature>
<feature type="transmembrane region" description="Helical" evidence="1">
    <location>
        <begin position="85"/>
        <end position="105"/>
    </location>
</feature>
<feature type="transmembrane region" description="Helical" evidence="1">
    <location>
        <begin position="120"/>
        <end position="142"/>
    </location>
</feature>
<feature type="transmembrane region" description="Helical" evidence="1">
    <location>
        <begin position="161"/>
        <end position="181"/>
    </location>
</feature>
<feature type="transmembrane region" description="Helical" evidence="1">
    <location>
        <begin position="186"/>
        <end position="206"/>
    </location>
</feature>
<feature type="transmembrane region" description="Helical" evidence="1">
    <location>
        <begin position="361"/>
        <end position="381"/>
    </location>
</feature>
<feature type="transmembrane region" description="Helical" evidence="1">
    <location>
        <begin position="387"/>
        <end position="407"/>
    </location>
</feature>
<feature type="transmembrane region" description="Helical" evidence="1">
    <location>
        <begin position="417"/>
        <end position="437"/>
    </location>
</feature>
<feature type="transmembrane region" description="Helical" evidence="1">
    <location>
        <begin position="452"/>
        <end position="472"/>
    </location>
</feature>
<feature type="transmembrane region" description="Helical" evidence="1">
    <location>
        <begin position="475"/>
        <end position="495"/>
    </location>
</feature>
<feature type="modified residue" description="FMN phosphoryl threonine" evidence="1">
    <location>
        <position position="248"/>
    </location>
</feature>
<keyword id="KW-0997">Cell inner membrane</keyword>
<keyword id="KW-1003">Cell membrane</keyword>
<keyword id="KW-0285">Flavoprotein</keyword>
<keyword id="KW-0288">FMN</keyword>
<keyword id="KW-0406">Ion transport</keyword>
<keyword id="KW-0472">Membrane</keyword>
<keyword id="KW-0520">NAD</keyword>
<keyword id="KW-0597">Phosphoprotein</keyword>
<keyword id="KW-0915">Sodium</keyword>
<keyword id="KW-0739">Sodium transport</keyword>
<keyword id="KW-1278">Translocase</keyword>
<keyword id="KW-0812">Transmembrane</keyword>
<keyword id="KW-1133">Transmembrane helix</keyword>
<keyword id="KW-0813">Transport</keyword>
<keyword id="KW-0830">Ubiquinone</keyword>
<comment type="function">
    <text evidence="1">NQR complex catalyzes the reduction of ubiquinone-1 to ubiquinol by two successive reactions, coupled with the transport of Na(+) ions from the cytoplasm to the periplasm. NqrA to NqrE are probably involved in the second step, the conversion of ubisemiquinone to ubiquinol.</text>
</comment>
<comment type="catalytic activity">
    <reaction evidence="1">
        <text>a ubiquinone + n Na(+)(in) + NADH + H(+) = a ubiquinol + n Na(+)(out) + NAD(+)</text>
        <dbReference type="Rhea" id="RHEA:47748"/>
        <dbReference type="Rhea" id="RHEA-COMP:9565"/>
        <dbReference type="Rhea" id="RHEA-COMP:9566"/>
        <dbReference type="ChEBI" id="CHEBI:15378"/>
        <dbReference type="ChEBI" id="CHEBI:16389"/>
        <dbReference type="ChEBI" id="CHEBI:17976"/>
        <dbReference type="ChEBI" id="CHEBI:29101"/>
        <dbReference type="ChEBI" id="CHEBI:57540"/>
        <dbReference type="ChEBI" id="CHEBI:57945"/>
        <dbReference type="EC" id="7.2.1.1"/>
    </reaction>
</comment>
<comment type="cofactor">
    <cofactor evidence="1">
        <name>FMN</name>
        <dbReference type="ChEBI" id="CHEBI:58210"/>
    </cofactor>
</comment>
<comment type="subunit">
    <text evidence="1">Composed of six subunits; NqrA, NqrB, NqrC, NqrD, NqrE and NqrF.</text>
</comment>
<comment type="subcellular location">
    <subcellularLocation>
        <location evidence="1">Cell inner membrane</location>
        <topology evidence="1">Multi-pass membrane protein</topology>
    </subcellularLocation>
</comment>
<comment type="similarity">
    <text evidence="1">Belongs to the NqrB/RnfD family.</text>
</comment>
<proteinExistence type="inferred from homology"/>
<sequence>MLEKFVDSLWKFCRKSKFQYMTPVADAVDSFCFEPLHTPSSPPFVRDAVDVKRWMMLVVIALMPTVFVAIWNSGLQALVYQSSDPQIMEAFLHISGFTSYFSFVSKEIGIASVLFAGCKIFLPLLFISYAVGGTCEVLFAIIRKHKIAEGLLVTGMLYPLILPPTIPYWMAALGIAFGVVIGKELFGGTGMNILNPALTGRAFLFFTFPAKMSGDVWVGSNPSKIKESLAMMNSLAERSNFDGFSQSTCLQILNSTPPSVKRVHIDAIASNILKLEHVPSQEVLQSQFSTWAESFPGLTVDQLSLDQLQNFVTSPTAEGGLGLLPAHFDAAYSLTDAIYGIGKFSTGNLFFGNIVGSLGETSTVACLLGAGLLLLTGIASWRTMLSFGLSSLFFAWLFKIISILAAGQSGAWAPAKFFIPVYRHLFIGGLAFGLVFMATDPVTSPATKLAKWFYGAFIGFLTILIRLINPAYPEGVMLAILLGNVFAPSFDRIALKQYRQRRV</sequence>
<name>NQRB_CHLMU</name>
<dbReference type="EC" id="7.2.1.1" evidence="1"/>
<dbReference type="EMBL" id="AE002160">
    <property type="protein sequence ID" value="AAF39389.1"/>
    <property type="molecule type" value="Genomic_DNA"/>
</dbReference>
<dbReference type="PIR" id="B81690">
    <property type="entry name" value="B81690"/>
</dbReference>
<dbReference type="RefSeq" id="WP_010230815.1">
    <property type="nucleotide sequence ID" value="NZ_CP063055.1"/>
</dbReference>
<dbReference type="SMR" id="Q9PKB6"/>
<dbReference type="GeneID" id="1245910"/>
<dbReference type="KEGG" id="cmu:TC_0550"/>
<dbReference type="eggNOG" id="COG1805">
    <property type="taxonomic scope" value="Bacteria"/>
</dbReference>
<dbReference type="HOGENOM" id="CLU_042020_1_1_0"/>
<dbReference type="OrthoDB" id="9776359at2"/>
<dbReference type="Proteomes" id="UP000000800">
    <property type="component" value="Chromosome"/>
</dbReference>
<dbReference type="GO" id="GO:0005886">
    <property type="term" value="C:plasma membrane"/>
    <property type="evidence" value="ECO:0007669"/>
    <property type="project" value="UniProtKB-SubCell"/>
</dbReference>
<dbReference type="GO" id="GO:0010181">
    <property type="term" value="F:FMN binding"/>
    <property type="evidence" value="ECO:0007669"/>
    <property type="project" value="InterPro"/>
</dbReference>
<dbReference type="GO" id="GO:0016655">
    <property type="term" value="F:oxidoreductase activity, acting on NAD(P)H, quinone or similar compound as acceptor"/>
    <property type="evidence" value="ECO:0007669"/>
    <property type="project" value="UniProtKB-UniRule"/>
</dbReference>
<dbReference type="GO" id="GO:0022904">
    <property type="term" value="P:respiratory electron transport chain"/>
    <property type="evidence" value="ECO:0007669"/>
    <property type="project" value="InterPro"/>
</dbReference>
<dbReference type="GO" id="GO:0006814">
    <property type="term" value="P:sodium ion transport"/>
    <property type="evidence" value="ECO:0007669"/>
    <property type="project" value="UniProtKB-UniRule"/>
</dbReference>
<dbReference type="GO" id="GO:0055085">
    <property type="term" value="P:transmembrane transport"/>
    <property type="evidence" value="ECO:0007669"/>
    <property type="project" value="InterPro"/>
</dbReference>
<dbReference type="HAMAP" id="MF_00426">
    <property type="entry name" value="NqrB"/>
    <property type="match status" value="1"/>
</dbReference>
<dbReference type="InterPro" id="IPR010966">
    <property type="entry name" value="NqrB"/>
</dbReference>
<dbReference type="InterPro" id="IPR004338">
    <property type="entry name" value="NqrB/RnfD"/>
</dbReference>
<dbReference type="NCBIfam" id="TIGR01937">
    <property type="entry name" value="nqrB"/>
    <property type="match status" value="1"/>
</dbReference>
<dbReference type="NCBIfam" id="NF002181">
    <property type="entry name" value="PRK01024.1"/>
    <property type="match status" value="1"/>
</dbReference>
<dbReference type="PANTHER" id="PTHR30578">
    <property type="entry name" value="ELECTRON TRANSPORT COMPLEX PROTEIN RNFD"/>
    <property type="match status" value="1"/>
</dbReference>
<dbReference type="PANTHER" id="PTHR30578:SF1">
    <property type="entry name" value="NA(+)-TRANSLOCATING NADH-QUINONE REDUCTASE SUBUNIT B"/>
    <property type="match status" value="1"/>
</dbReference>
<dbReference type="Pfam" id="PF03116">
    <property type="entry name" value="NQR2_RnfD_RnfE"/>
    <property type="match status" value="1"/>
</dbReference>
<protein>
    <recommendedName>
        <fullName evidence="1">Na(+)-translocating NADH-quinone reductase subunit B</fullName>
        <shortName evidence="1">Na(+)-NQR subunit B</shortName>
        <shortName evidence="1">Na(+)-translocating NQR subunit B</shortName>
        <ecNumber evidence="1">7.2.1.1</ecNumber>
    </recommendedName>
    <alternativeName>
        <fullName evidence="1">NQR complex subunit B</fullName>
    </alternativeName>
    <alternativeName>
        <fullName evidence="1">NQR-1 subunit B</fullName>
    </alternativeName>
</protein>
<reference key="1">
    <citation type="journal article" date="2000" name="Nucleic Acids Res.">
        <title>Genome sequences of Chlamydia trachomatis MoPn and Chlamydia pneumoniae AR39.</title>
        <authorList>
            <person name="Read T.D."/>
            <person name="Brunham R.C."/>
            <person name="Shen C."/>
            <person name="Gill S.R."/>
            <person name="Heidelberg J.F."/>
            <person name="White O."/>
            <person name="Hickey E.K."/>
            <person name="Peterson J.D."/>
            <person name="Utterback T.R."/>
            <person name="Berry K.J."/>
            <person name="Bass S."/>
            <person name="Linher K.D."/>
            <person name="Weidman J.F."/>
            <person name="Khouri H.M."/>
            <person name="Craven B."/>
            <person name="Bowman C."/>
            <person name="Dodson R.J."/>
            <person name="Gwinn M.L."/>
            <person name="Nelson W.C."/>
            <person name="DeBoy R.T."/>
            <person name="Kolonay J.F."/>
            <person name="McClarty G."/>
            <person name="Salzberg S.L."/>
            <person name="Eisen J.A."/>
            <person name="Fraser C.M."/>
        </authorList>
    </citation>
    <scope>NUCLEOTIDE SEQUENCE [LARGE SCALE GENOMIC DNA]</scope>
    <source>
        <strain>MoPn / Nigg</strain>
    </source>
</reference>